<protein>
    <recommendedName>
        <fullName evidence="1">5-deoxy-glucuronate isomerase</fullName>
        <shortName evidence="1">5DG isomerase</shortName>
        <ecNumber evidence="1">5.3.1.30</ecNumber>
    </recommendedName>
</protein>
<comment type="function">
    <text evidence="1">Involved in the isomerization of 5-deoxy-glucuronate (5DG) to 5-dehydro-2-deoxy-D-gluconate (DKG or 2-deoxy-5-keto-D-gluconate).</text>
</comment>
<comment type="catalytic activity">
    <reaction evidence="1">
        <text>5-deoxy-D-glucuronate = 5-dehydro-2-deoxy-D-gluconate</text>
        <dbReference type="Rhea" id="RHEA:25840"/>
        <dbReference type="ChEBI" id="CHEBI:16669"/>
        <dbReference type="ChEBI" id="CHEBI:58852"/>
        <dbReference type="EC" id="5.3.1.30"/>
    </reaction>
</comment>
<comment type="pathway">
    <text evidence="1">Polyol metabolism; myo-inositol degradation into acetyl-CoA; acetyl-CoA from myo-inositol: step 4/7.</text>
</comment>
<comment type="similarity">
    <text evidence="1">Belongs to the isomerase IolB family.</text>
</comment>
<sequence>MGKLLRKPLNERIAPGVTLVQDINQGNSPLSYVGFRLIELEEDAVYQETLDGLECCIVALTGKISVSEGDHVFSEIGTRANVFEKIPTDSVFISGGRAFQVKADAEKARVALCYSPADRNLPTTLIKASDNSIEQRGKYQNKRLVHNILPDVSEVASSLLVVEVYTDGGNFSSYPPHKHDHDNLPAESLLEESYYHEINPKQGFIFQRVYTDDRALDETMAVEHQNAVIVPEGYHPVGVPDGYDSYYLNVMAGPKRVWEFHNDPDHEWILERD</sequence>
<gene>
    <name evidence="1" type="primary">iolB</name>
    <name type="ordered locus">lmo0384</name>
</gene>
<keyword id="KW-0413">Isomerase</keyword>
<keyword id="KW-1185">Reference proteome</keyword>
<proteinExistence type="inferred from homology"/>
<evidence type="ECO:0000255" key="1">
    <source>
        <dbReference type="HAMAP-Rule" id="MF_01673"/>
    </source>
</evidence>
<organism>
    <name type="scientific">Listeria monocytogenes serovar 1/2a (strain ATCC BAA-679 / EGD-e)</name>
    <dbReference type="NCBI Taxonomy" id="169963"/>
    <lineage>
        <taxon>Bacteria</taxon>
        <taxon>Bacillati</taxon>
        <taxon>Bacillota</taxon>
        <taxon>Bacilli</taxon>
        <taxon>Bacillales</taxon>
        <taxon>Listeriaceae</taxon>
        <taxon>Listeria</taxon>
    </lineage>
</organism>
<feature type="chain" id="PRO_0000352391" description="5-deoxy-glucuronate isomerase">
    <location>
        <begin position="1"/>
        <end position="273"/>
    </location>
</feature>
<reference key="1">
    <citation type="journal article" date="2001" name="Science">
        <title>Comparative genomics of Listeria species.</title>
        <authorList>
            <person name="Glaser P."/>
            <person name="Frangeul L."/>
            <person name="Buchrieser C."/>
            <person name="Rusniok C."/>
            <person name="Amend A."/>
            <person name="Baquero F."/>
            <person name="Berche P."/>
            <person name="Bloecker H."/>
            <person name="Brandt P."/>
            <person name="Chakraborty T."/>
            <person name="Charbit A."/>
            <person name="Chetouani F."/>
            <person name="Couve E."/>
            <person name="de Daruvar A."/>
            <person name="Dehoux P."/>
            <person name="Domann E."/>
            <person name="Dominguez-Bernal G."/>
            <person name="Duchaud E."/>
            <person name="Durant L."/>
            <person name="Dussurget O."/>
            <person name="Entian K.-D."/>
            <person name="Fsihi H."/>
            <person name="Garcia-del Portillo F."/>
            <person name="Garrido P."/>
            <person name="Gautier L."/>
            <person name="Goebel W."/>
            <person name="Gomez-Lopez N."/>
            <person name="Hain T."/>
            <person name="Hauf J."/>
            <person name="Jackson D."/>
            <person name="Jones L.-M."/>
            <person name="Kaerst U."/>
            <person name="Kreft J."/>
            <person name="Kuhn M."/>
            <person name="Kunst F."/>
            <person name="Kurapkat G."/>
            <person name="Madueno E."/>
            <person name="Maitournam A."/>
            <person name="Mata Vicente J."/>
            <person name="Ng E."/>
            <person name="Nedjari H."/>
            <person name="Nordsiek G."/>
            <person name="Novella S."/>
            <person name="de Pablos B."/>
            <person name="Perez-Diaz J.-C."/>
            <person name="Purcell R."/>
            <person name="Remmel B."/>
            <person name="Rose M."/>
            <person name="Schlueter T."/>
            <person name="Simoes N."/>
            <person name="Tierrez A."/>
            <person name="Vazquez-Boland J.-A."/>
            <person name="Voss H."/>
            <person name="Wehland J."/>
            <person name="Cossart P."/>
        </authorList>
    </citation>
    <scope>NUCLEOTIDE SEQUENCE [LARGE SCALE GENOMIC DNA]</scope>
    <source>
        <strain>ATCC BAA-679 / EGD-e</strain>
    </source>
</reference>
<name>IOLB_LISMO</name>
<accession>Q8Y9Y3</accession>
<dbReference type="EC" id="5.3.1.30" evidence="1"/>
<dbReference type="EMBL" id="AL591975">
    <property type="protein sequence ID" value="CAC98463.1"/>
    <property type="molecule type" value="Genomic_DNA"/>
</dbReference>
<dbReference type="PIR" id="AI1122">
    <property type="entry name" value="AI1122"/>
</dbReference>
<dbReference type="RefSeq" id="NP_463914.1">
    <property type="nucleotide sequence ID" value="NC_003210.1"/>
</dbReference>
<dbReference type="RefSeq" id="WP_010989445.1">
    <property type="nucleotide sequence ID" value="NC_003210.1"/>
</dbReference>
<dbReference type="SMR" id="Q8Y9Y3"/>
<dbReference type="STRING" id="169963.gene:17593035"/>
<dbReference type="PaxDb" id="169963-lmo0384"/>
<dbReference type="EnsemblBacteria" id="CAC98463">
    <property type="protein sequence ID" value="CAC98463"/>
    <property type="gene ID" value="CAC98463"/>
</dbReference>
<dbReference type="GeneID" id="987640"/>
<dbReference type="KEGG" id="lmo:lmo0384"/>
<dbReference type="PATRIC" id="fig|169963.11.peg.397"/>
<dbReference type="eggNOG" id="COG3718">
    <property type="taxonomic scope" value="Bacteria"/>
</dbReference>
<dbReference type="HOGENOM" id="CLU_066438_1_0_9"/>
<dbReference type="OrthoDB" id="9799936at2"/>
<dbReference type="PhylomeDB" id="Q8Y9Y3"/>
<dbReference type="BioCyc" id="LMON169963:LMO0384-MONOMER"/>
<dbReference type="UniPathway" id="UPA00076">
    <property type="reaction ID" value="UER00920"/>
</dbReference>
<dbReference type="Proteomes" id="UP000000817">
    <property type="component" value="Chromosome"/>
</dbReference>
<dbReference type="GO" id="GO:0102482">
    <property type="term" value="F:5-deoxy-D-glucuronate isomerase activity"/>
    <property type="evidence" value="ECO:0007669"/>
    <property type="project" value="UniProtKB-EC"/>
</dbReference>
<dbReference type="GO" id="GO:0008880">
    <property type="term" value="F:glucuronate isomerase activity"/>
    <property type="evidence" value="ECO:0007669"/>
    <property type="project" value="InterPro"/>
</dbReference>
<dbReference type="GO" id="GO:0019310">
    <property type="term" value="P:inositol catabolic process"/>
    <property type="evidence" value="ECO:0007669"/>
    <property type="project" value="UniProtKB-UniRule"/>
</dbReference>
<dbReference type="Gene3D" id="2.60.120.10">
    <property type="entry name" value="Jelly Rolls"/>
    <property type="match status" value="2"/>
</dbReference>
<dbReference type="HAMAP" id="MF_01673">
    <property type="entry name" value="IolB"/>
    <property type="match status" value="1"/>
</dbReference>
<dbReference type="InterPro" id="IPR024203">
    <property type="entry name" value="Deoxy-glucuronate_isom_IolB"/>
</dbReference>
<dbReference type="InterPro" id="IPR023770">
    <property type="entry name" value="IolB_Bacilli"/>
</dbReference>
<dbReference type="InterPro" id="IPR021120">
    <property type="entry name" value="KduI/IolB_isomerase"/>
</dbReference>
<dbReference type="InterPro" id="IPR014710">
    <property type="entry name" value="RmlC-like_jellyroll"/>
</dbReference>
<dbReference type="InterPro" id="IPR011051">
    <property type="entry name" value="RmlC_Cupin_sf"/>
</dbReference>
<dbReference type="NCBIfam" id="TIGR04378">
    <property type="entry name" value="myo_inos_iolB"/>
    <property type="match status" value="1"/>
</dbReference>
<dbReference type="PANTHER" id="PTHR39193">
    <property type="entry name" value="5-DEOXY-GLUCURONATE ISOMERASE"/>
    <property type="match status" value="1"/>
</dbReference>
<dbReference type="PANTHER" id="PTHR39193:SF1">
    <property type="entry name" value="5-DEOXY-GLUCURONATE ISOMERASE"/>
    <property type="match status" value="1"/>
</dbReference>
<dbReference type="Pfam" id="PF04962">
    <property type="entry name" value="KduI"/>
    <property type="match status" value="1"/>
</dbReference>
<dbReference type="PIRSF" id="PIRSF036628">
    <property type="entry name" value="IolB"/>
    <property type="match status" value="1"/>
</dbReference>
<dbReference type="SUPFAM" id="SSF51182">
    <property type="entry name" value="RmlC-like cupins"/>
    <property type="match status" value="1"/>
</dbReference>